<gene>
    <name type="ordered locus">HD_0326</name>
</gene>
<comment type="function">
    <text evidence="1">Binds to DNA and alters its conformation. May be involved in regulation of gene expression, nucleoid organization and DNA protection.</text>
</comment>
<comment type="subunit">
    <text evidence="1">Homodimer.</text>
</comment>
<comment type="subcellular location">
    <subcellularLocation>
        <location evidence="1">Cytoplasm</location>
        <location evidence="1">Nucleoid</location>
    </subcellularLocation>
</comment>
<comment type="similarity">
    <text evidence="1">Belongs to the YbaB/EbfC family.</text>
</comment>
<dbReference type="EMBL" id="AE017143">
    <property type="protein sequence ID" value="AAP95303.1"/>
    <property type="molecule type" value="Genomic_DNA"/>
</dbReference>
<dbReference type="RefSeq" id="WP_010944356.1">
    <property type="nucleotide sequence ID" value="NC_002940.2"/>
</dbReference>
<dbReference type="SMR" id="Q7VNZ1"/>
<dbReference type="STRING" id="233412.HD_0326"/>
<dbReference type="KEGG" id="hdu:HD_0326"/>
<dbReference type="eggNOG" id="COG0718">
    <property type="taxonomic scope" value="Bacteria"/>
</dbReference>
<dbReference type="HOGENOM" id="CLU_140930_0_0_6"/>
<dbReference type="OrthoDB" id="9808738at2"/>
<dbReference type="Proteomes" id="UP000001022">
    <property type="component" value="Chromosome"/>
</dbReference>
<dbReference type="GO" id="GO:0043590">
    <property type="term" value="C:bacterial nucleoid"/>
    <property type="evidence" value="ECO:0007669"/>
    <property type="project" value="UniProtKB-UniRule"/>
</dbReference>
<dbReference type="GO" id="GO:0005829">
    <property type="term" value="C:cytosol"/>
    <property type="evidence" value="ECO:0007669"/>
    <property type="project" value="TreeGrafter"/>
</dbReference>
<dbReference type="GO" id="GO:0003677">
    <property type="term" value="F:DNA binding"/>
    <property type="evidence" value="ECO:0007669"/>
    <property type="project" value="UniProtKB-UniRule"/>
</dbReference>
<dbReference type="FunFam" id="3.30.1310.10:FF:000001">
    <property type="entry name" value="Nucleoid-associated protein YbaB"/>
    <property type="match status" value="1"/>
</dbReference>
<dbReference type="Gene3D" id="3.30.1310.10">
    <property type="entry name" value="Nucleoid-associated protein YbaB-like domain"/>
    <property type="match status" value="1"/>
</dbReference>
<dbReference type="HAMAP" id="MF_00274">
    <property type="entry name" value="DNA_YbaB_EbfC"/>
    <property type="match status" value="1"/>
</dbReference>
<dbReference type="InterPro" id="IPR036894">
    <property type="entry name" value="YbaB-like_sf"/>
</dbReference>
<dbReference type="InterPro" id="IPR004401">
    <property type="entry name" value="YbaB/EbfC"/>
</dbReference>
<dbReference type="NCBIfam" id="TIGR00103">
    <property type="entry name" value="DNA_YbaB_EbfC"/>
    <property type="match status" value="1"/>
</dbReference>
<dbReference type="PANTHER" id="PTHR33449">
    <property type="entry name" value="NUCLEOID-ASSOCIATED PROTEIN YBAB"/>
    <property type="match status" value="1"/>
</dbReference>
<dbReference type="PANTHER" id="PTHR33449:SF1">
    <property type="entry name" value="NUCLEOID-ASSOCIATED PROTEIN YBAB"/>
    <property type="match status" value="1"/>
</dbReference>
<dbReference type="Pfam" id="PF02575">
    <property type="entry name" value="YbaB_DNA_bd"/>
    <property type="match status" value="1"/>
</dbReference>
<dbReference type="PIRSF" id="PIRSF004555">
    <property type="entry name" value="UCP004555"/>
    <property type="match status" value="1"/>
</dbReference>
<dbReference type="SUPFAM" id="SSF82607">
    <property type="entry name" value="YbaB-like"/>
    <property type="match status" value="1"/>
</dbReference>
<evidence type="ECO:0000255" key="1">
    <source>
        <dbReference type="HAMAP-Rule" id="MF_00274"/>
    </source>
</evidence>
<sequence length="109" mass="11999">MFGKGGLGNLMKQAQQMQERMQKMQEEIAQLEVTGESGAGLVKVTINGAHNCRRIEIDASLMEDDKEMVEDLVAAAFNDAVRRAEDLQKEKMASVTSGMQLPPGMKLPF</sequence>
<keyword id="KW-0963">Cytoplasm</keyword>
<keyword id="KW-0238">DNA-binding</keyword>
<keyword id="KW-1185">Reference proteome</keyword>
<feature type="chain" id="PRO_0000170396" description="Nucleoid-associated protein HD_0326">
    <location>
        <begin position="1"/>
        <end position="109"/>
    </location>
</feature>
<accession>Q7VNZ1</accession>
<reference key="1">
    <citation type="submission" date="2003-06" db="EMBL/GenBank/DDBJ databases">
        <title>The complete genome sequence of Haemophilus ducreyi.</title>
        <authorList>
            <person name="Munson R.S. Jr."/>
            <person name="Ray W.C."/>
            <person name="Mahairas G."/>
            <person name="Sabo P."/>
            <person name="Mungur R."/>
            <person name="Johnson L."/>
            <person name="Nguyen D."/>
            <person name="Wang J."/>
            <person name="Forst C."/>
            <person name="Hood L."/>
        </authorList>
    </citation>
    <scope>NUCLEOTIDE SEQUENCE [LARGE SCALE GENOMIC DNA]</scope>
    <source>
        <strain>35000HP / ATCC 700724</strain>
    </source>
</reference>
<organism>
    <name type="scientific">Haemophilus ducreyi (strain 35000HP / ATCC 700724)</name>
    <dbReference type="NCBI Taxonomy" id="233412"/>
    <lineage>
        <taxon>Bacteria</taxon>
        <taxon>Pseudomonadati</taxon>
        <taxon>Pseudomonadota</taxon>
        <taxon>Gammaproteobacteria</taxon>
        <taxon>Pasteurellales</taxon>
        <taxon>Pasteurellaceae</taxon>
        <taxon>Haemophilus</taxon>
    </lineage>
</organism>
<proteinExistence type="inferred from homology"/>
<name>Y326_HAEDU</name>
<protein>
    <recommendedName>
        <fullName evidence="1">Nucleoid-associated protein HD_0326</fullName>
    </recommendedName>
</protein>